<keyword id="KW-0004">4Fe-4S</keyword>
<keyword id="KW-0342">GTP-binding</keyword>
<keyword id="KW-0408">Iron</keyword>
<keyword id="KW-0411">Iron-sulfur</keyword>
<keyword id="KW-0456">Lyase</keyword>
<keyword id="KW-0479">Metal-binding</keyword>
<keyword id="KW-0501">Molybdenum cofactor biosynthesis</keyword>
<keyword id="KW-0547">Nucleotide-binding</keyword>
<keyword id="KW-1185">Reference proteome</keyword>
<keyword id="KW-0949">S-adenosyl-L-methionine</keyword>
<proteinExistence type="inferred from homology"/>
<name>MOAA_NITHX</name>
<accession>Q1QN98</accession>
<comment type="function">
    <text evidence="1">Catalyzes the cyclization of GTP to (8S)-3',8-cyclo-7,8-dihydroguanosine 5'-triphosphate.</text>
</comment>
<comment type="catalytic activity">
    <reaction evidence="1">
        <text>GTP + AH2 + S-adenosyl-L-methionine = (8S)-3',8-cyclo-7,8-dihydroguanosine 5'-triphosphate + 5'-deoxyadenosine + L-methionine + A + H(+)</text>
        <dbReference type="Rhea" id="RHEA:49576"/>
        <dbReference type="ChEBI" id="CHEBI:13193"/>
        <dbReference type="ChEBI" id="CHEBI:15378"/>
        <dbReference type="ChEBI" id="CHEBI:17319"/>
        <dbReference type="ChEBI" id="CHEBI:17499"/>
        <dbReference type="ChEBI" id="CHEBI:37565"/>
        <dbReference type="ChEBI" id="CHEBI:57844"/>
        <dbReference type="ChEBI" id="CHEBI:59789"/>
        <dbReference type="ChEBI" id="CHEBI:131766"/>
        <dbReference type="EC" id="4.1.99.22"/>
    </reaction>
</comment>
<comment type="cofactor">
    <cofactor evidence="1">
        <name>[4Fe-4S] cluster</name>
        <dbReference type="ChEBI" id="CHEBI:49883"/>
    </cofactor>
    <text evidence="1">Binds 2 [4Fe-4S] clusters. Binds 1 [4Fe-4S] cluster coordinated with 3 cysteines and an exchangeable S-adenosyl-L-methionine and 1 [4Fe-4S] cluster coordinated with 3 cysteines and the GTP-derived substrate.</text>
</comment>
<comment type="pathway">
    <text evidence="1">Cofactor biosynthesis; molybdopterin biosynthesis.</text>
</comment>
<comment type="subunit">
    <text evidence="1">Monomer and homodimer.</text>
</comment>
<comment type="similarity">
    <text evidence="1">Belongs to the radical SAM superfamily. MoaA family.</text>
</comment>
<protein>
    <recommendedName>
        <fullName evidence="1">GTP 3',8-cyclase</fullName>
        <ecNumber evidence="1">4.1.99.22</ecNumber>
    </recommendedName>
    <alternativeName>
        <fullName evidence="1">Molybdenum cofactor biosynthesis protein A</fullName>
    </alternativeName>
</protein>
<sequence>MTGLSTLTEASDSRKMVDPYGRTISYLRVSVTDRCDLRCFYCMSEDMTFLPKADLLTLEELDRLCSAFIAKGVRKLRLTGGEPLVRRNVMSLIRSLSRHLGTGALNELTLTTNGSQLARFAAELKDCGVRRINVSLDTLDPAKFREITRWGDIQKVMAGIDAAQAAGLAVKINAVALKNLNDHEIPSLMEWAHGRDMALTLIEVMPMGDIGQSRADQYLPLSMLRARLAGQYTLTDVDDSTGGPARYVKVNETGGKLGFITPMTHNFCESCNRVRITCTGTLHTCLGHEDASDLRRPLRASAGDELLYETIDRAIGLKPKGHDFIIDRHNRPSVSRHMSVTGG</sequence>
<reference key="1">
    <citation type="submission" date="2006-03" db="EMBL/GenBank/DDBJ databases">
        <title>Complete sequence of chromosome of Nitrobacter hamburgensis X14.</title>
        <authorList>
            <consortium name="US DOE Joint Genome Institute"/>
            <person name="Copeland A."/>
            <person name="Lucas S."/>
            <person name="Lapidus A."/>
            <person name="Barry K."/>
            <person name="Detter J.C."/>
            <person name="Glavina del Rio T."/>
            <person name="Hammon N."/>
            <person name="Israni S."/>
            <person name="Dalin E."/>
            <person name="Tice H."/>
            <person name="Pitluck S."/>
            <person name="Chain P."/>
            <person name="Malfatti S."/>
            <person name="Shin M."/>
            <person name="Vergez L."/>
            <person name="Schmutz J."/>
            <person name="Larimer F."/>
            <person name="Land M."/>
            <person name="Hauser L."/>
            <person name="Kyrpides N."/>
            <person name="Ivanova N."/>
            <person name="Ward B."/>
            <person name="Arp D."/>
            <person name="Klotz M."/>
            <person name="Stein L."/>
            <person name="O'Mullan G."/>
            <person name="Starkenburg S."/>
            <person name="Sayavedra L."/>
            <person name="Poret-Peterson A.T."/>
            <person name="Gentry M.E."/>
            <person name="Bruce D."/>
            <person name="Richardson P."/>
        </authorList>
    </citation>
    <scope>NUCLEOTIDE SEQUENCE [LARGE SCALE GENOMIC DNA]</scope>
    <source>
        <strain>DSM 10229 / NCIMB 13809 / X14</strain>
    </source>
</reference>
<evidence type="ECO:0000255" key="1">
    <source>
        <dbReference type="HAMAP-Rule" id="MF_01225"/>
    </source>
</evidence>
<evidence type="ECO:0000255" key="2">
    <source>
        <dbReference type="PROSITE-ProRule" id="PRU01266"/>
    </source>
</evidence>
<feature type="chain" id="PRO_1000054206" description="GTP 3',8-cyclase">
    <location>
        <begin position="1"/>
        <end position="343"/>
    </location>
</feature>
<feature type="domain" description="Radical SAM core" evidence="2">
    <location>
        <begin position="19"/>
        <end position="244"/>
    </location>
</feature>
<feature type="binding site" evidence="1">
    <location>
        <position position="28"/>
    </location>
    <ligand>
        <name>GTP</name>
        <dbReference type="ChEBI" id="CHEBI:37565"/>
    </ligand>
</feature>
<feature type="binding site" evidence="1">
    <location>
        <position position="35"/>
    </location>
    <ligand>
        <name>[4Fe-4S] cluster</name>
        <dbReference type="ChEBI" id="CHEBI:49883"/>
        <label>1</label>
        <note>4Fe-4S-S-AdoMet</note>
    </ligand>
</feature>
<feature type="binding site" evidence="1">
    <location>
        <position position="39"/>
    </location>
    <ligand>
        <name>[4Fe-4S] cluster</name>
        <dbReference type="ChEBI" id="CHEBI:49883"/>
        <label>1</label>
        <note>4Fe-4S-S-AdoMet</note>
    </ligand>
</feature>
<feature type="binding site" evidence="1">
    <location>
        <position position="41"/>
    </location>
    <ligand>
        <name>S-adenosyl-L-methionine</name>
        <dbReference type="ChEBI" id="CHEBI:59789"/>
    </ligand>
</feature>
<feature type="binding site" evidence="1">
    <location>
        <position position="42"/>
    </location>
    <ligand>
        <name>[4Fe-4S] cluster</name>
        <dbReference type="ChEBI" id="CHEBI:49883"/>
        <label>1</label>
        <note>4Fe-4S-S-AdoMet</note>
    </ligand>
</feature>
<feature type="binding site" evidence="1">
    <location>
        <position position="77"/>
    </location>
    <ligand>
        <name>GTP</name>
        <dbReference type="ChEBI" id="CHEBI:37565"/>
    </ligand>
</feature>
<feature type="binding site" evidence="1">
    <location>
        <position position="81"/>
    </location>
    <ligand>
        <name>S-adenosyl-L-methionine</name>
        <dbReference type="ChEBI" id="CHEBI:59789"/>
    </ligand>
</feature>
<feature type="binding site" evidence="1">
    <location>
        <position position="111"/>
    </location>
    <ligand>
        <name>GTP</name>
        <dbReference type="ChEBI" id="CHEBI:37565"/>
    </ligand>
</feature>
<feature type="binding site" evidence="1">
    <location>
        <position position="135"/>
    </location>
    <ligand>
        <name>S-adenosyl-L-methionine</name>
        <dbReference type="ChEBI" id="CHEBI:59789"/>
    </ligand>
</feature>
<feature type="binding site" evidence="1">
    <location>
        <position position="171"/>
    </location>
    <ligand>
        <name>GTP</name>
        <dbReference type="ChEBI" id="CHEBI:37565"/>
    </ligand>
</feature>
<feature type="binding site" evidence="1">
    <location>
        <position position="205"/>
    </location>
    <ligand>
        <name>S-adenosyl-L-methionine</name>
        <dbReference type="ChEBI" id="CHEBI:59789"/>
    </ligand>
</feature>
<feature type="binding site" evidence="1">
    <location>
        <position position="268"/>
    </location>
    <ligand>
        <name>[4Fe-4S] cluster</name>
        <dbReference type="ChEBI" id="CHEBI:49883"/>
        <label>2</label>
        <note>4Fe-4S-substrate</note>
    </ligand>
</feature>
<feature type="binding site" evidence="1">
    <location>
        <position position="271"/>
    </location>
    <ligand>
        <name>[4Fe-4S] cluster</name>
        <dbReference type="ChEBI" id="CHEBI:49883"/>
        <label>2</label>
        <note>4Fe-4S-substrate</note>
    </ligand>
</feature>
<feature type="binding site" evidence="1">
    <location>
        <begin position="273"/>
        <end position="275"/>
    </location>
    <ligand>
        <name>GTP</name>
        <dbReference type="ChEBI" id="CHEBI:37565"/>
    </ligand>
</feature>
<feature type="binding site" evidence="1">
    <location>
        <position position="285"/>
    </location>
    <ligand>
        <name>[4Fe-4S] cluster</name>
        <dbReference type="ChEBI" id="CHEBI:49883"/>
        <label>2</label>
        <note>4Fe-4S-substrate</note>
    </ligand>
</feature>
<gene>
    <name evidence="1" type="primary">moaA</name>
    <name type="ordered locus">Nham_1477</name>
</gene>
<organism>
    <name type="scientific">Nitrobacter hamburgensis (strain DSM 10229 / NCIMB 13809 / X14)</name>
    <dbReference type="NCBI Taxonomy" id="323097"/>
    <lineage>
        <taxon>Bacteria</taxon>
        <taxon>Pseudomonadati</taxon>
        <taxon>Pseudomonadota</taxon>
        <taxon>Alphaproteobacteria</taxon>
        <taxon>Hyphomicrobiales</taxon>
        <taxon>Nitrobacteraceae</taxon>
        <taxon>Nitrobacter</taxon>
    </lineage>
</organism>
<dbReference type="EC" id="4.1.99.22" evidence="1"/>
<dbReference type="EMBL" id="CP000319">
    <property type="protein sequence ID" value="ABE62299.1"/>
    <property type="molecule type" value="Genomic_DNA"/>
</dbReference>
<dbReference type="RefSeq" id="WP_011509989.1">
    <property type="nucleotide sequence ID" value="NC_007964.1"/>
</dbReference>
<dbReference type="SMR" id="Q1QN98"/>
<dbReference type="STRING" id="323097.Nham_1477"/>
<dbReference type="KEGG" id="nha:Nham_1477"/>
<dbReference type="eggNOG" id="COG2896">
    <property type="taxonomic scope" value="Bacteria"/>
</dbReference>
<dbReference type="HOGENOM" id="CLU_009273_0_1_5"/>
<dbReference type="OrthoDB" id="9763993at2"/>
<dbReference type="UniPathway" id="UPA00344"/>
<dbReference type="Proteomes" id="UP000001953">
    <property type="component" value="Chromosome"/>
</dbReference>
<dbReference type="GO" id="GO:0051539">
    <property type="term" value="F:4 iron, 4 sulfur cluster binding"/>
    <property type="evidence" value="ECO:0007669"/>
    <property type="project" value="UniProtKB-UniRule"/>
</dbReference>
<dbReference type="GO" id="GO:0061799">
    <property type="term" value="F:cyclic pyranopterin monophosphate synthase activity"/>
    <property type="evidence" value="ECO:0007669"/>
    <property type="project" value="TreeGrafter"/>
</dbReference>
<dbReference type="GO" id="GO:0061798">
    <property type="term" value="F:GTP 3',8'-cyclase activity"/>
    <property type="evidence" value="ECO:0007669"/>
    <property type="project" value="UniProtKB-UniRule"/>
</dbReference>
<dbReference type="GO" id="GO:0005525">
    <property type="term" value="F:GTP binding"/>
    <property type="evidence" value="ECO:0007669"/>
    <property type="project" value="UniProtKB-UniRule"/>
</dbReference>
<dbReference type="GO" id="GO:0046872">
    <property type="term" value="F:metal ion binding"/>
    <property type="evidence" value="ECO:0007669"/>
    <property type="project" value="UniProtKB-KW"/>
</dbReference>
<dbReference type="GO" id="GO:1904047">
    <property type="term" value="F:S-adenosyl-L-methionine binding"/>
    <property type="evidence" value="ECO:0007669"/>
    <property type="project" value="UniProtKB-UniRule"/>
</dbReference>
<dbReference type="GO" id="GO:0006777">
    <property type="term" value="P:Mo-molybdopterin cofactor biosynthetic process"/>
    <property type="evidence" value="ECO:0007669"/>
    <property type="project" value="UniProtKB-UniRule"/>
</dbReference>
<dbReference type="CDD" id="cd01335">
    <property type="entry name" value="Radical_SAM"/>
    <property type="match status" value="1"/>
</dbReference>
<dbReference type="CDD" id="cd21117">
    <property type="entry name" value="Twitch_MoaA"/>
    <property type="match status" value="1"/>
</dbReference>
<dbReference type="Gene3D" id="3.20.20.70">
    <property type="entry name" value="Aldolase class I"/>
    <property type="match status" value="1"/>
</dbReference>
<dbReference type="HAMAP" id="MF_01225_B">
    <property type="entry name" value="MoaA_B"/>
    <property type="match status" value="1"/>
</dbReference>
<dbReference type="InterPro" id="IPR013785">
    <property type="entry name" value="Aldolase_TIM"/>
</dbReference>
<dbReference type="InterPro" id="IPR006638">
    <property type="entry name" value="Elp3/MiaA/NifB-like_rSAM"/>
</dbReference>
<dbReference type="InterPro" id="IPR013483">
    <property type="entry name" value="MoaA"/>
</dbReference>
<dbReference type="InterPro" id="IPR000385">
    <property type="entry name" value="MoaA_NifB_PqqE_Fe-S-bd_CS"/>
</dbReference>
<dbReference type="InterPro" id="IPR010505">
    <property type="entry name" value="MoaA_twitch"/>
</dbReference>
<dbReference type="InterPro" id="IPR050105">
    <property type="entry name" value="MoCo_biosynth_MoaA/MoaC"/>
</dbReference>
<dbReference type="InterPro" id="IPR007197">
    <property type="entry name" value="rSAM"/>
</dbReference>
<dbReference type="NCBIfam" id="TIGR02666">
    <property type="entry name" value="moaA"/>
    <property type="match status" value="1"/>
</dbReference>
<dbReference type="PANTHER" id="PTHR22960:SF0">
    <property type="entry name" value="MOLYBDENUM COFACTOR BIOSYNTHESIS PROTEIN 1"/>
    <property type="match status" value="1"/>
</dbReference>
<dbReference type="PANTHER" id="PTHR22960">
    <property type="entry name" value="MOLYBDOPTERIN COFACTOR SYNTHESIS PROTEIN A"/>
    <property type="match status" value="1"/>
</dbReference>
<dbReference type="Pfam" id="PF13353">
    <property type="entry name" value="Fer4_12"/>
    <property type="match status" value="1"/>
</dbReference>
<dbReference type="Pfam" id="PF06463">
    <property type="entry name" value="Mob_synth_C"/>
    <property type="match status" value="1"/>
</dbReference>
<dbReference type="Pfam" id="PF04055">
    <property type="entry name" value="Radical_SAM"/>
    <property type="match status" value="1"/>
</dbReference>
<dbReference type="SFLD" id="SFLDG01383">
    <property type="entry name" value="cyclic_pyranopterin_phosphate"/>
    <property type="match status" value="1"/>
</dbReference>
<dbReference type="SFLD" id="SFLDG01386">
    <property type="entry name" value="main_SPASM_domain-containing"/>
    <property type="match status" value="1"/>
</dbReference>
<dbReference type="SMART" id="SM00729">
    <property type="entry name" value="Elp3"/>
    <property type="match status" value="1"/>
</dbReference>
<dbReference type="SUPFAM" id="SSF102114">
    <property type="entry name" value="Radical SAM enzymes"/>
    <property type="match status" value="1"/>
</dbReference>
<dbReference type="PROSITE" id="PS01305">
    <property type="entry name" value="MOAA_NIFB_PQQE"/>
    <property type="match status" value="1"/>
</dbReference>
<dbReference type="PROSITE" id="PS51918">
    <property type="entry name" value="RADICAL_SAM"/>
    <property type="match status" value="1"/>
</dbReference>